<keyword id="KW-0007">Acetylation</keyword>
<keyword id="KW-0143">Chaperone</keyword>
<keyword id="KW-0963">Cytoplasm</keyword>
<keyword id="KW-0903">Direct protein sequencing</keyword>
<keyword id="KW-0273">Eye lens protein</keyword>
<keyword id="KW-0325">Glycoprotein</keyword>
<keyword id="KW-0479">Metal-binding</keyword>
<keyword id="KW-0488">Methylation</keyword>
<keyword id="KW-0539">Nucleus</keyword>
<keyword id="KW-0597">Phosphoprotein</keyword>
<keyword id="KW-0862">Zinc</keyword>
<evidence type="ECO:0000250" key="1"/>
<evidence type="ECO:0000250" key="2">
    <source>
        <dbReference type="UniProtKB" id="P02470"/>
    </source>
</evidence>
<evidence type="ECO:0000250" key="3">
    <source>
        <dbReference type="UniProtKB" id="P02474"/>
    </source>
</evidence>
<evidence type="ECO:0000250" key="4">
    <source>
        <dbReference type="UniProtKB" id="P02489"/>
    </source>
</evidence>
<evidence type="ECO:0000255" key="5">
    <source>
        <dbReference type="PROSITE-ProRule" id="PRU00285"/>
    </source>
</evidence>
<evidence type="ECO:0000256" key="6">
    <source>
        <dbReference type="SAM" id="MobiDB-lite"/>
    </source>
</evidence>
<evidence type="ECO:0000305" key="7"/>
<name>CRYAA_MELUS</name>
<comment type="function">
    <text evidence="4">Contributes to the transparency and refractive index of the lens. Acts as a chaperone, preventing aggregation of various proteins under a wide range of stress conditions. Required for the correct formation of lens intermediate filaments as part of a complex composed of BFSP1, BFSP2 and CRYAA.</text>
</comment>
<comment type="subunit">
    <text evidence="2 4">Heteromer composed of three CRYAA and one CRYAB subunits. Inter-subunit bridging via zinc ions enhances stability, which is crucial as there is no protein turn over in the lens. Can also form homodimers and homotetramers (dimers of dimers) which serve as the building blocks of homooligomers (By similarity). Within homooligomers, the zinc-binding motif is created from residues of 3 different molecules. His-100 and Glu-102 from one molecule are ligands of the zinc ion, and His-107 and His-154 residues from additional molecules complete the site with tetrahedral coordination geometry (By similarity). Part of a complex required for lens intermediate filament formation composed of BFSP1, BFSP2 and CRYAA (By similarity).</text>
</comment>
<comment type="subcellular location">
    <subcellularLocation>
        <location evidence="4">Cytoplasm</location>
    </subcellularLocation>
    <subcellularLocation>
        <location evidence="4">Nucleus</location>
    </subcellularLocation>
    <text evidence="4">Translocates to the nucleus during heat shock and resides in sub-nuclear structures known as SC35 speckles or nuclear splicing speckles.</text>
</comment>
<comment type="PTM">
    <text evidence="4">Acetylation at Lys-70 may increase chaperone activity.</text>
</comment>
<comment type="PTM">
    <text evidence="4">Undergoes age-dependent proteolytical cleavage at the C-terminus.</text>
</comment>
<comment type="similarity">
    <text evidence="5">Belongs to the small heat shock protein (HSP20) family.</text>
</comment>
<reference key="1">
    <citation type="book" date="1980" name="Protides of the biological fluids, Proc. 28th colloquium">
        <title>Trends in the molecular evolution of alpha-crystallin.</title>
        <editorList>
            <person name="Peeters H."/>
        </editorList>
        <authorList>
            <person name="de Jong W.W."/>
            <person name="Zweers A."/>
            <person name="Goodman M."/>
        </authorList>
    </citation>
    <scope>PARTIAL PROTEIN SEQUENCE</scope>
</reference>
<protein>
    <recommendedName>
        <fullName>Alpha-crystallin A chain</fullName>
    </recommendedName>
</protein>
<proteinExistence type="evidence at protein level"/>
<accession>P02480</accession>
<dbReference type="PIR" id="A02882">
    <property type="entry name" value="CYBRAA"/>
</dbReference>
<dbReference type="SMR" id="P02480"/>
<dbReference type="GlyCosmos" id="P02480">
    <property type="glycosylation" value="1 site, No reported glycans"/>
</dbReference>
<dbReference type="GO" id="GO:0005737">
    <property type="term" value="C:cytoplasm"/>
    <property type="evidence" value="ECO:0000250"/>
    <property type="project" value="UniProtKB"/>
</dbReference>
<dbReference type="GO" id="GO:0005634">
    <property type="term" value="C:nucleus"/>
    <property type="evidence" value="ECO:0000250"/>
    <property type="project" value="UniProtKB"/>
</dbReference>
<dbReference type="GO" id="GO:0046872">
    <property type="term" value="F:metal ion binding"/>
    <property type="evidence" value="ECO:0007669"/>
    <property type="project" value="UniProtKB-KW"/>
</dbReference>
<dbReference type="GO" id="GO:0005212">
    <property type="term" value="F:structural constituent of eye lens"/>
    <property type="evidence" value="ECO:0007669"/>
    <property type="project" value="UniProtKB-KW"/>
</dbReference>
<dbReference type="GO" id="GO:0051082">
    <property type="term" value="F:unfolded protein binding"/>
    <property type="evidence" value="ECO:0007669"/>
    <property type="project" value="TreeGrafter"/>
</dbReference>
<dbReference type="GO" id="GO:0002088">
    <property type="term" value="P:lens development in camera-type eye"/>
    <property type="evidence" value="ECO:0007669"/>
    <property type="project" value="TreeGrafter"/>
</dbReference>
<dbReference type="GO" id="GO:0043066">
    <property type="term" value="P:negative regulation of apoptotic process"/>
    <property type="evidence" value="ECO:0007669"/>
    <property type="project" value="TreeGrafter"/>
</dbReference>
<dbReference type="GO" id="GO:0042026">
    <property type="term" value="P:protein refolding"/>
    <property type="evidence" value="ECO:0007669"/>
    <property type="project" value="TreeGrafter"/>
</dbReference>
<dbReference type="GO" id="GO:0009408">
    <property type="term" value="P:response to heat"/>
    <property type="evidence" value="ECO:0007669"/>
    <property type="project" value="TreeGrafter"/>
</dbReference>
<dbReference type="CDD" id="cd06497">
    <property type="entry name" value="ACD_alphaA-crystallin_HspB4"/>
    <property type="match status" value="1"/>
</dbReference>
<dbReference type="FunFam" id="2.60.40.790:FF:000008">
    <property type="entry name" value="Alpha-crystallin A chain"/>
    <property type="match status" value="1"/>
</dbReference>
<dbReference type="Gene3D" id="2.60.40.790">
    <property type="match status" value="1"/>
</dbReference>
<dbReference type="InterPro" id="IPR002068">
    <property type="entry name" value="A-crystallin/Hsp20_dom"/>
</dbReference>
<dbReference type="InterPro" id="IPR055269">
    <property type="entry name" value="Alpha-crystallin/HSP_16"/>
</dbReference>
<dbReference type="InterPro" id="IPR001436">
    <property type="entry name" value="Alpha-crystallin/sHSP_animal"/>
</dbReference>
<dbReference type="InterPro" id="IPR003090">
    <property type="entry name" value="Alpha-crystallin_N"/>
</dbReference>
<dbReference type="InterPro" id="IPR008978">
    <property type="entry name" value="HSP20-like_chaperone"/>
</dbReference>
<dbReference type="PANTHER" id="PTHR45640:SF14">
    <property type="entry name" value="ALPHA-CRYSTALLIN A CHAIN"/>
    <property type="match status" value="1"/>
</dbReference>
<dbReference type="PANTHER" id="PTHR45640">
    <property type="entry name" value="HEAT SHOCK PROTEIN HSP-12.2-RELATED"/>
    <property type="match status" value="1"/>
</dbReference>
<dbReference type="Pfam" id="PF00525">
    <property type="entry name" value="Crystallin"/>
    <property type="match status" value="1"/>
</dbReference>
<dbReference type="Pfam" id="PF00011">
    <property type="entry name" value="HSP20"/>
    <property type="match status" value="1"/>
</dbReference>
<dbReference type="PIRSF" id="PIRSF036514">
    <property type="entry name" value="Sm_HSP_B1"/>
    <property type="match status" value="1"/>
</dbReference>
<dbReference type="PRINTS" id="PR00299">
    <property type="entry name" value="ACRYSTALLIN"/>
</dbReference>
<dbReference type="SUPFAM" id="SSF49764">
    <property type="entry name" value="HSP20-like chaperones"/>
    <property type="match status" value="1"/>
</dbReference>
<dbReference type="PROSITE" id="PS01031">
    <property type="entry name" value="SHSP"/>
    <property type="match status" value="1"/>
</dbReference>
<organism>
    <name type="scientific">Melursus ursinus</name>
    <name type="common">Sloth bear</name>
    <name type="synonym">Ursus ursinus</name>
    <dbReference type="NCBI Taxonomy" id="9636"/>
    <lineage>
        <taxon>Eukaryota</taxon>
        <taxon>Metazoa</taxon>
        <taxon>Chordata</taxon>
        <taxon>Craniata</taxon>
        <taxon>Vertebrata</taxon>
        <taxon>Euteleostomi</taxon>
        <taxon>Mammalia</taxon>
        <taxon>Eutheria</taxon>
        <taxon>Laurasiatheria</taxon>
        <taxon>Carnivora</taxon>
        <taxon>Caniformia</taxon>
        <taxon>Ursidae</taxon>
        <taxon>Melursus</taxon>
    </lineage>
</organism>
<sequence length="173" mass="19779">MDIAIQHPWFKRALGPFYPSRLFDQFFGEGLFEYDLLPFLSSTISPYYRQSLFRTVLDSGISEVRSDRDKFVIYLDVKHFSPEDLTVKVLEDFVEIHGKHNERQDDHGYISREFHRRYRLPSNVDQSALSCSLSADGMLTFSGPKVPSGMDAGHSERAIPVSREEKPSSAPSS</sequence>
<feature type="chain" id="PRO_0000125890" description="Alpha-crystallin A chain">
    <location>
        <begin position="1"/>
        <end position="173"/>
    </location>
</feature>
<feature type="domain" description="sHSP" evidence="5">
    <location>
        <begin position="52"/>
        <end position="162"/>
    </location>
</feature>
<feature type="region of interest" description="Required for complex formation with BFSP1 and BFSP2" evidence="4">
    <location>
        <begin position="1"/>
        <end position="63"/>
    </location>
</feature>
<feature type="region of interest" description="Disordered" evidence="6">
    <location>
        <begin position="144"/>
        <end position="173"/>
    </location>
</feature>
<feature type="compositionally biased region" description="Basic and acidic residues" evidence="6">
    <location>
        <begin position="153"/>
        <end position="167"/>
    </location>
</feature>
<feature type="binding site" evidence="2">
    <location>
        <position position="100"/>
    </location>
    <ligand>
        <name>Zn(2+)</name>
        <dbReference type="ChEBI" id="CHEBI:29105"/>
        <label>1</label>
    </ligand>
</feature>
<feature type="binding site" evidence="2">
    <location>
        <position position="102"/>
    </location>
    <ligand>
        <name>Zn(2+)</name>
        <dbReference type="ChEBI" id="CHEBI:29105"/>
        <label>1</label>
    </ligand>
</feature>
<feature type="binding site" evidence="2">
    <location>
        <position position="107"/>
    </location>
    <ligand>
        <name>Zn(2+)</name>
        <dbReference type="ChEBI" id="CHEBI:29105"/>
        <label>2</label>
    </ligand>
</feature>
<feature type="binding site" evidence="2">
    <location>
        <position position="154"/>
    </location>
    <ligand>
        <name>Zn(2+)</name>
        <dbReference type="ChEBI" id="CHEBI:29105"/>
        <label>3</label>
    </ligand>
</feature>
<feature type="modified residue" description="N-acetylmethionine" evidence="3 7">
    <location>
        <position position="1"/>
    </location>
</feature>
<feature type="modified residue" description="Deamidated glutamine; partial" evidence="1">
    <location>
        <position position="6"/>
    </location>
</feature>
<feature type="modified residue" description="Phosphoserine" evidence="4">
    <location>
        <position position="45"/>
    </location>
</feature>
<feature type="modified residue" description="Deamidated glutamine; partial" evidence="1">
    <location>
        <position position="50"/>
    </location>
</feature>
<feature type="modified residue" description="N6-acetyllysine" evidence="4">
    <location>
        <position position="70"/>
    </location>
</feature>
<feature type="modified residue" description="N6-acetyllysine" evidence="4">
    <location>
        <position position="99"/>
    </location>
</feature>
<feature type="modified residue" description="Deamidated asparagine; partial" evidence="1">
    <location>
        <position position="101"/>
    </location>
</feature>
<feature type="modified residue" description="Phosphoserine" evidence="2">
    <location>
        <position position="122"/>
    </location>
</feature>
<feature type="modified residue" description="Deamidated asparagine; partial" evidence="1">
    <location>
        <position position="123"/>
    </location>
</feature>
<feature type="glycosylation site" description="O-linked (GlcNAc) serine" evidence="1">
    <location>
        <position position="162"/>
    </location>
</feature>
<gene>
    <name type="primary">CRYAA</name>
</gene>